<dbReference type="EC" id="6.1.1.4" evidence="1"/>
<dbReference type="EMBL" id="CP000151">
    <property type="protein sequence ID" value="ABB07341.1"/>
    <property type="molecule type" value="Genomic_DNA"/>
</dbReference>
<dbReference type="RefSeq" id="WP_011350931.1">
    <property type="nucleotide sequence ID" value="NC_007510.1"/>
</dbReference>
<dbReference type="SMR" id="Q39JM5"/>
<dbReference type="GeneID" id="45093654"/>
<dbReference type="KEGG" id="bur:Bcep18194_A3740"/>
<dbReference type="PATRIC" id="fig|482957.22.peg.597"/>
<dbReference type="HOGENOM" id="CLU_004427_0_0_4"/>
<dbReference type="Proteomes" id="UP000002705">
    <property type="component" value="Chromosome 1"/>
</dbReference>
<dbReference type="GO" id="GO:0005829">
    <property type="term" value="C:cytosol"/>
    <property type="evidence" value="ECO:0007669"/>
    <property type="project" value="TreeGrafter"/>
</dbReference>
<dbReference type="GO" id="GO:0002161">
    <property type="term" value="F:aminoacyl-tRNA deacylase activity"/>
    <property type="evidence" value="ECO:0007669"/>
    <property type="project" value="InterPro"/>
</dbReference>
<dbReference type="GO" id="GO:0005524">
    <property type="term" value="F:ATP binding"/>
    <property type="evidence" value="ECO:0007669"/>
    <property type="project" value="UniProtKB-UniRule"/>
</dbReference>
<dbReference type="GO" id="GO:0004823">
    <property type="term" value="F:leucine-tRNA ligase activity"/>
    <property type="evidence" value="ECO:0007669"/>
    <property type="project" value="UniProtKB-UniRule"/>
</dbReference>
<dbReference type="GO" id="GO:0006429">
    <property type="term" value="P:leucyl-tRNA aminoacylation"/>
    <property type="evidence" value="ECO:0007669"/>
    <property type="project" value="UniProtKB-UniRule"/>
</dbReference>
<dbReference type="CDD" id="cd07958">
    <property type="entry name" value="Anticodon_Ia_Leu_BEm"/>
    <property type="match status" value="1"/>
</dbReference>
<dbReference type="CDD" id="cd00812">
    <property type="entry name" value="LeuRS_core"/>
    <property type="match status" value="1"/>
</dbReference>
<dbReference type="FunFam" id="1.10.730.10:FF:000002">
    <property type="entry name" value="Leucine--tRNA ligase"/>
    <property type="match status" value="1"/>
</dbReference>
<dbReference type="FunFam" id="2.20.28.290:FF:000001">
    <property type="entry name" value="Leucine--tRNA ligase"/>
    <property type="match status" value="1"/>
</dbReference>
<dbReference type="FunFam" id="3.10.20.590:FF:000001">
    <property type="entry name" value="Leucine--tRNA ligase"/>
    <property type="match status" value="1"/>
</dbReference>
<dbReference type="FunFam" id="3.40.50.620:FF:000003">
    <property type="entry name" value="Leucine--tRNA ligase"/>
    <property type="match status" value="1"/>
</dbReference>
<dbReference type="FunFam" id="3.40.50.620:FF:000056">
    <property type="entry name" value="Leucine--tRNA ligase"/>
    <property type="match status" value="1"/>
</dbReference>
<dbReference type="FunFam" id="3.90.740.10:FF:000012">
    <property type="entry name" value="Leucine--tRNA ligase"/>
    <property type="match status" value="1"/>
</dbReference>
<dbReference type="Gene3D" id="2.20.28.290">
    <property type="match status" value="1"/>
</dbReference>
<dbReference type="Gene3D" id="3.10.20.590">
    <property type="match status" value="1"/>
</dbReference>
<dbReference type="Gene3D" id="3.40.50.620">
    <property type="entry name" value="HUPs"/>
    <property type="match status" value="2"/>
</dbReference>
<dbReference type="Gene3D" id="1.10.730.10">
    <property type="entry name" value="Isoleucyl-tRNA Synthetase, Domain 1"/>
    <property type="match status" value="2"/>
</dbReference>
<dbReference type="HAMAP" id="MF_00049_B">
    <property type="entry name" value="Leu_tRNA_synth_B"/>
    <property type="match status" value="1"/>
</dbReference>
<dbReference type="InterPro" id="IPR001412">
    <property type="entry name" value="aa-tRNA-synth_I_CS"/>
</dbReference>
<dbReference type="InterPro" id="IPR002300">
    <property type="entry name" value="aa-tRNA-synth_Ia"/>
</dbReference>
<dbReference type="InterPro" id="IPR002302">
    <property type="entry name" value="Leu-tRNA-ligase"/>
</dbReference>
<dbReference type="InterPro" id="IPR025709">
    <property type="entry name" value="Leu_tRNA-synth_edit"/>
</dbReference>
<dbReference type="InterPro" id="IPR013155">
    <property type="entry name" value="M/V/L/I-tRNA-synth_anticd-bd"/>
</dbReference>
<dbReference type="InterPro" id="IPR015413">
    <property type="entry name" value="Methionyl/Leucyl_tRNA_Synth"/>
</dbReference>
<dbReference type="InterPro" id="IPR014729">
    <property type="entry name" value="Rossmann-like_a/b/a_fold"/>
</dbReference>
<dbReference type="InterPro" id="IPR009080">
    <property type="entry name" value="tRNAsynth_Ia_anticodon-bd"/>
</dbReference>
<dbReference type="InterPro" id="IPR009008">
    <property type="entry name" value="Val/Leu/Ile-tRNA-synth_edit"/>
</dbReference>
<dbReference type="NCBIfam" id="TIGR00396">
    <property type="entry name" value="leuS_bact"/>
    <property type="match status" value="1"/>
</dbReference>
<dbReference type="PANTHER" id="PTHR43740:SF2">
    <property type="entry name" value="LEUCINE--TRNA LIGASE, MITOCHONDRIAL"/>
    <property type="match status" value="1"/>
</dbReference>
<dbReference type="PANTHER" id="PTHR43740">
    <property type="entry name" value="LEUCYL-TRNA SYNTHETASE"/>
    <property type="match status" value="1"/>
</dbReference>
<dbReference type="Pfam" id="PF08264">
    <property type="entry name" value="Anticodon_1"/>
    <property type="match status" value="1"/>
</dbReference>
<dbReference type="Pfam" id="PF00133">
    <property type="entry name" value="tRNA-synt_1"/>
    <property type="match status" value="2"/>
</dbReference>
<dbReference type="Pfam" id="PF13603">
    <property type="entry name" value="tRNA-synt_1_2"/>
    <property type="match status" value="1"/>
</dbReference>
<dbReference type="Pfam" id="PF09334">
    <property type="entry name" value="tRNA-synt_1g"/>
    <property type="match status" value="1"/>
</dbReference>
<dbReference type="PRINTS" id="PR00985">
    <property type="entry name" value="TRNASYNTHLEU"/>
</dbReference>
<dbReference type="SUPFAM" id="SSF47323">
    <property type="entry name" value="Anticodon-binding domain of a subclass of class I aminoacyl-tRNA synthetases"/>
    <property type="match status" value="1"/>
</dbReference>
<dbReference type="SUPFAM" id="SSF52374">
    <property type="entry name" value="Nucleotidylyl transferase"/>
    <property type="match status" value="1"/>
</dbReference>
<dbReference type="SUPFAM" id="SSF50677">
    <property type="entry name" value="ValRS/IleRS/LeuRS editing domain"/>
    <property type="match status" value="1"/>
</dbReference>
<dbReference type="PROSITE" id="PS00178">
    <property type="entry name" value="AA_TRNA_LIGASE_I"/>
    <property type="match status" value="1"/>
</dbReference>
<sequence>MHERYVPADVEAAAQGDWRAADAYKTQEDSQKPKFYCVSMLPYPSGKLHMGHVRNYTINDVMYRYLRMNGYNTLMPMGWDAFGMPAENAAMANGVPPAKWTYDNIDYMKGQMQSMGLAIDWSREIATCKPDYYKWNQWLFLKMLEKGIAYKKTGTVNWDPVDQTVLANEQVIDGRGWRSGALVEKREIPMYYLRITQYADELLNDLDGLGWPERVKIMQQNWIGKSFGVNFGFPYELDGEKKLLRVFTTRADTIMGVTFCAIAAEHPLATRLAQDKPELLTFIDECKRGGVAEADVATMEKKGVATGFSVAHPLTGEPVEVWIGNYVLMSYGEGAVMGVPGHDERDFAFAKKYDLPIKQVISAEGQQYSLDAWQEWYGDKETAVCVNSGKYDGLRYAEAVDAVAADLNAGGFGDKQVTWRLRDWGVSRQRYWGTPIPIIHCPSCGDVPVPEQDLPVVLPEDLVPDGSGNPLAKSEAFLNCACPKCGAAAKRETDTMDTFVDSSWYFSRYTAPDAETMVDARTDYWMPMDQYIGGIEHAILHLLYSRFWTKVMRDLGLVKFGEPAKNLLTQGMVLNETFYREDASGKKTWYNPLDVTVTHDDKGRPVGATLNTDGQPVVLGGIEKMSKSKNNGVDPQLLIDQYGADTARLFTMFAAPPEQQLEWSGAGVEGASRFLRRVWSFGAANREALAARAGFDAAALGEADKALRREIYSVLKQADFDYQRLQYNTVVSAAMKMLNAIDGAKGATPGVLRETYGVLLRVLYPVVPHVTFELWKALGYADEFGPLLDAPWPKVDEAALEQAEIELVLQVNGKVRGALKVAKDASREAIEAAAVADDAFAKFSDGKPAKKIVVVPGRLVNIVV</sequence>
<protein>
    <recommendedName>
        <fullName evidence="1">Leucine--tRNA ligase</fullName>
        <ecNumber evidence="1">6.1.1.4</ecNumber>
    </recommendedName>
    <alternativeName>
        <fullName evidence="1">Leucyl-tRNA synthetase</fullName>
        <shortName evidence="1">LeuRS</shortName>
    </alternativeName>
</protein>
<feature type="chain" id="PRO_1000009312" description="Leucine--tRNA ligase">
    <location>
        <begin position="1"/>
        <end position="864"/>
    </location>
</feature>
<feature type="short sequence motif" description="'HIGH' region">
    <location>
        <begin position="42"/>
        <end position="52"/>
    </location>
</feature>
<feature type="short sequence motif" description="'KMSKS' region">
    <location>
        <begin position="624"/>
        <end position="628"/>
    </location>
</feature>
<feature type="binding site" evidence="1">
    <location>
        <position position="627"/>
    </location>
    <ligand>
        <name>ATP</name>
        <dbReference type="ChEBI" id="CHEBI:30616"/>
    </ligand>
</feature>
<proteinExistence type="inferred from homology"/>
<evidence type="ECO:0000255" key="1">
    <source>
        <dbReference type="HAMAP-Rule" id="MF_00049"/>
    </source>
</evidence>
<keyword id="KW-0030">Aminoacyl-tRNA synthetase</keyword>
<keyword id="KW-0067">ATP-binding</keyword>
<keyword id="KW-0963">Cytoplasm</keyword>
<keyword id="KW-0436">Ligase</keyword>
<keyword id="KW-0547">Nucleotide-binding</keyword>
<keyword id="KW-0648">Protein biosynthesis</keyword>
<comment type="catalytic activity">
    <reaction evidence="1">
        <text>tRNA(Leu) + L-leucine + ATP = L-leucyl-tRNA(Leu) + AMP + diphosphate</text>
        <dbReference type="Rhea" id="RHEA:11688"/>
        <dbReference type="Rhea" id="RHEA-COMP:9613"/>
        <dbReference type="Rhea" id="RHEA-COMP:9622"/>
        <dbReference type="ChEBI" id="CHEBI:30616"/>
        <dbReference type="ChEBI" id="CHEBI:33019"/>
        <dbReference type="ChEBI" id="CHEBI:57427"/>
        <dbReference type="ChEBI" id="CHEBI:78442"/>
        <dbReference type="ChEBI" id="CHEBI:78494"/>
        <dbReference type="ChEBI" id="CHEBI:456215"/>
        <dbReference type="EC" id="6.1.1.4"/>
    </reaction>
</comment>
<comment type="subcellular location">
    <subcellularLocation>
        <location evidence="1">Cytoplasm</location>
    </subcellularLocation>
</comment>
<comment type="similarity">
    <text evidence="1">Belongs to the class-I aminoacyl-tRNA synthetase family.</text>
</comment>
<accession>Q39JM5</accession>
<reference key="1">
    <citation type="submission" date="2005-10" db="EMBL/GenBank/DDBJ databases">
        <title>Complete sequence of chromosome 1 of Burkholderia sp. 383.</title>
        <authorList>
            <consortium name="US DOE Joint Genome Institute"/>
            <person name="Copeland A."/>
            <person name="Lucas S."/>
            <person name="Lapidus A."/>
            <person name="Barry K."/>
            <person name="Detter J.C."/>
            <person name="Glavina T."/>
            <person name="Hammon N."/>
            <person name="Israni S."/>
            <person name="Pitluck S."/>
            <person name="Chain P."/>
            <person name="Malfatti S."/>
            <person name="Shin M."/>
            <person name="Vergez L."/>
            <person name="Schmutz J."/>
            <person name="Larimer F."/>
            <person name="Land M."/>
            <person name="Kyrpides N."/>
            <person name="Lykidis A."/>
            <person name="Richardson P."/>
        </authorList>
    </citation>
    <scope>NUCLEOTIDE SEQUENCE [LARGE SCALE GENOMIC DNA]</scope>
    <source>
        <strain>ATCC 17760 / DSM 23089 / LMG 22485 / NCIMB 9086 / R18194 / 383</strain>
    </source>
</reference>
<name>SYL_BURL3</name>
<organism>
    <name type="scientific">Burkholderia lata (strain ATCC 17760 / DSM 23089 / LMG 22485 / NCIMB 9086 / R18194 / 383)</name>
    <dbReference type="NCBI Taxonomy" id="482957"/>
    <lineage>
        <taxon>Bacteria</taxon>
        <taxon>Pseudomonadati</taxon>
        <taxon>Pseudomonadota</taxon>
        <taxon>Betaproteobacteria</taxon>
        <taxon>Burkholderiales</taxon>
        <taxon>Burkholderiaceae</taxon>
        <taxon>Burkholderia</taxon>
        <taxon>Burkholderia cepacia complex</taxon>
    </lineage>
</organism>
<gene>
    <name evidence="1" type="primary">leuS</name>
    <name type="ordered locus">Bcep18194_A3740</name>
</gene>